<reference key="1">
    <citation type="submission" date="2006-03" db="EMBL/GenBank/DDBJ databases">
        <title>Complete sequence of chromosome of Psychrobacter cryohalolentis K5.</title>
        <authorList>
            <consortium name="US DOE Joint Genome Institute"/>
            <person name="Copeland A."/>
            <person name="Lucas S."/>
            <person name="Lapidus A."/>
            <person name="Barry K."/>
            <person name="Detter J.C."/>
            <person name="Glavina T."/>
            <person name="Hammon N."/>
            <person name="Israni S."/>
            <person name="Dalin E."/>
            <person name="Tice H."/>
            <person name="Pitluck S."/>
            <person name="Brettin T."/>
            <person name="Bruce D."/>
            <person name="Han C."/>
            <person name="Tapia R."/>
            <person name="Sims D.R."/>
            <person name="Gilna P."/>
            <person name="Schmutz J."/>
            <person name="Larimer F."/>
            <person name="Land M."/>
            <person name="Hauser L."/>
            <person name="Kyrpides N."/>
            <person name="Kim E."/>
            <person name="Richardson P."/>
        </authorList>
    </citation>
    <scope>NUCLEOTIDE SEQUENCE [LARGE SCALE GENOMIC DNA]</scope>
    <source>
        <strain>ATCC BAA-1226 / DSM 17306 / VKM B-2378 / K5</strain>
    </source>
</reference>
<gene>
    <name evidence="1" type="primary">tsaC</name>
    <name type="synonym">rimN</name>
    <name type="ordered locus">Pcryo_2462</name>
</gene>
<keyword id="KW-0067">ATP-binding</keyword>
<keyword id="KW-0963">Cytoplasm</keyword>
<keyword id="KW-0547">Nucleotide-binding</keyword>
<keyword id="KW-0548">Nucleotidyltransferase</keyword>
<keyword id="KW-0808">Transferase</keyword>
<keyword id="KW-0819">tRNA processing</keyword>
<proteinExistence type="inferred from homology"/>
<accession>Q1Q7W4</accession>
<dbReference type="EC" id="2.7.7.87" evidence="1"/>
<dbReference type="EMBL" id="CP000323">
    <property type="protein sequence ID" value="ABE76239.1"/>
    <property type="molecule type" value="Genomic_DNA"/>
</dbReference>
<dbReference type="RefSeq" id="WP_011514760.1">
    <property type="nucleotide sequence ID" value="NC_007969.1"/>
</dbReference>
<dbReference type="SMR" id="Q1Q7W4"/>
<dbReference type="STRING" id="335284.Pcryo_2462"/>
<dbReference type="KEGG" id="pcr:Pcryo_2462"/>
<dbReference type="eggNOG" id="COG0009">
    <property type="taxonomic scope" value="Bacteria"/>
</dbReference>
<dbReference type="HOGENOM" id="CLU_031397_6_0_6"/>
<dbReference type="Proteomes" id="UP000002425">
    <property type="component" value="Chromosome"/>
</dbReference>
<dbReference type="GO" id="GO:0005737">
    <property type="term" value="C:cytoplasm"/>
    <property type="evidence" value="ECO:0007669"/>
    <property type="project" value="UniProtKB-SubCell"/>
</dbReference>
<dbReference type="GO" id="GO:0005524">
    <property type="term" value="F:ATP binding"/>
    <property type="evidence" value="ECO:0007669"/>
    <property type="project" value="UniProtKB-UniRule"/>
</dbReference>
<dbReference type="GO" id="GO:0003725">
    <property type="term" value="F:double-stranded RNA binding"/>
    <property type="evidence" value="ECO:0007669"/>
    <property type="project" value="InterPro"/>
</dbReference>
<dbReference type="GO" id="GO:0061710">
    <property type="term" value="F:L-threonylcarbamoyladenylate synthase"/>
    <property type="evidence" value="ECO:0007669"/>
    <property type="project" value="UniProtKB-EC"/>
</dbReference>
<dbReference type="GO" id="GO:0000049">
    <property type="term" value="F:tRNA binding"/>
    <property type="evidence" value="ECO:0007669"/>
    <property type="project" value="TreeGrafter"/>
</dbReference>
<dbReference type="GO" id="GO:0006450">
    <property type="term" value="P:regulation of translational fidelity"/>
    <property type="evidence" value="ECO:0007669"/>
    <property type="project" value="TreeGrafter"/>
</dbReference>
<dbReference type="GO" id="GO:0002949">
    <property type="term" value="P:tRNA threonylcarbamoyladenosine modification"/>
    <property type="evidence" value="ECO:0007669"/>
    <property type="project" value="UniProtKB-UniRule"/>
</dbReference>
<dbReference type="Gene3D" id="3.90.870.10">
    <property type="entry name" value="DHBP synthase"/>
    <property type="match status" value="1"/>
</dbReference>
<dbReference type="HAMAP" id="MF_01852">
    <property type="entry name" value="TsaC"/>
    <property type="match status" value="1"/>
</dbReference>
<dbReference type="InterPro" id="IPR017945">
    <property type="entry name" value="DHBP_synth_RibB-like_a/b_dom"/>
</dbReference>
<dbReference type="InterPro" id="IPR006070">
    <property type="entry name" value="Sua5-like_dom"/>
</dbReference>
<dbReference type="InterPro" id="IPR023535">
    <property type="entry name" value="TC-AMP_synthase"/>
</dbReference>
<dbReference type="InterPro" id="IPR050156">
    <property type="entry name" value="TC-AMP_synthase_SUA5"/>
</dbReference>
<dbReference type="PANTHER" id="PTHR17490">
    <property type="entry name" value="SUA5"/>
    <property type="match status" value="1"/>
</dbReference>
<dbReference type="PANTHER" id="PTHR17490:SF18">
    <property type="entry name" value="THREONYLCARBAMOYL-AMP SYNTHASE"/>
    <property type="match status" value="1"/>
</dbReference>
<dbReference type="Pfam" id="PF01300">
    <property type="entry name" value="Sua5_yciO_yrdC"/>
    <property type="match status" value="1"/>
</dbReference>
<dbReference type="SUPFAM" id="SSF55821">
    <property type="entry name" value="YrdC/RibB"/>
    <property type="match status" value="1"/>
</dbReference>
<dbReference type="PROSITE" id="PS51163">
    <property type="entry name" value="YRDC"/>
    <property type="match status" value="1"/>
</dbReference>
<comment type="function">
    <text evidence="1">Required for the formation of a threonylcarbamoyl group on adenosine at position 37 (t(6)A37) in tRNAs that read codons beginning with adenine. Catalyzes the conversion of L-threonine, HCO(3)(-)/CO(2) and ATP to give threonylcarbamoyl-AMP (TC-AMP) as the acyladenylate intermediate, with the release of diphosphate.</text>
</comment>
<comment type="catalytic activity">
    <reaction evidence="1">
        <text>L-threonine + hydrogencarbonate + ATP = L-threonylcarbamoyladenylate + diphosphate + H2O</text>
        <dbReference type="Rhea" id="RHEA:36407"/>
        <dbReference type="ChEBI" id="CHEBI:15377"/>
        <dbReference type="ChEBI" id="CHEBI:17544"/>
        <dbReference type="ChEBI" id="CHEBI:30616"/>
        <dbReference type="ChEBI" id="CHEBI:33019"/>
        <dbReference type="ChEBI" id="CHEBI:57926"/>
        <dbReference type="ChEBI" id="CHEBI:73682"/>
        <dbReference type="EC" id="2.7.7.87"/>
    </reaction>
</comment>
<comment type="subcellular location">
    <subcellularLocation>
        <location evidence="1">Cytoplasm</location>
    </subcellularLocation>
</comment>
<comment type="similarity">
    <text evidence="1">Belongs to the SUA5 family. TsaC subfamily.</text>
</comment>
<name>TSAC_PSYCK</name>
<sequence>MSLSTPLITDSTIQAATWLKNGQLLAYPTESVWGIGCDPFNKQAVMRLLDIKQRPIEKGMIVVTDSPSRITALLEGLTAVERQTVLDSWQADSINATAKQAHTWLLPIPKNLPITIPSWITGAHDSVAVRVIDHPLVKQLCAQMVSVSNPYGFVVSTSCNPSGKPPALSLIEAQSYFLGDNVNSDECVGYLKGETLGYQLPSQIGDALTGQVIR</sequence>
<protein>
    <recommendedName>
        <fullName evidence="1">Threonylcarbamoyl-AMP synthase</fullName>
        <shortName evidence="1">TC-AMP synthase</shortName>
        <ecNumber evidence="1">2.7.7.87</ecNumber>
    </recommendedName>
    <alternativeName>
        <fullName evidence="1">L-threonylcarbamoyladenylate synthase</fullName>
    </alternativeName>
    <alternativeName>
        <fullName evidence="1">t(6)A37 threonylcarbamoyladenosine biosynthesis protein TsaC</fullName>
    </alternativeName>
    <alternativeName>
        <fullName evidence="1">tRNA threonylcarbamoyladenosine biosynthesis protein TsaC</fullName>
    </alternativeName>
</protein>
<organism>
    <name type="scientific">Psychrobacter cryohalolentis (strain ATCC BAA-1226 / DSM 17306 / VKM B-2378 / K5)</name>
    <dbReference type="NCBI Taxonomy" id="335284"/>
    <lineage>
        <taxon>Bacteria</taxon>
        <taxon>Pseudomonadati</taxon>
        <taxon>Pseudomonadota</taxon>
        <taxon>Gammaproteobacteria</taxon>
        <taxon>Moraxellales</taxon>
        <taxon>Moraxellaceae</taxon>
        <taxon>Psychrobacter</taxon>
    </lineage>
</organism>
<feature type="chain" id="PRO_0000352964" description="Threonylcarbamoyl-AMP synthase">
    <location>
        <begin position="1"/>
        <end position="214"/>
    </location>
</feature>
<feature type="domain" description="YrdC-like" evidence="1">
    <location>
        <begin position="9"/>
        <end position="214"/>
    </location>
</feature>
<evidence type="ECO:0000255" key="1">
    <source>
        <dbReference type="HAMAP-Rule" id="MF_01852"/>
    </source>
</evidence>